<name>UBL5_MOUSE</name>
<accession>Q9EPV8</accession>
<protein>
    <recommendedName>
        <fullName>Ubiquitin-like protein 5</fullName>
    </recommendedName>
</protein>
<sequence length="73" mass="8547">MIEVVCNDRLGKKVRVKCNTDDTIGDLKKLIAAQTGTRWNKIVLKKWYTIFKDHVSLGDYEIHDGMNLELYYQ</sequence>
<evidence type="ECO:0000250" key="1">
    <source>
        <dbReference type="UniProtKB" id="Q9BZL1"/>
    </source>
</evidence>
<evidence type="ECO:0007829" key="2">
    <source>
        <dbReference type="PDB" id="1UH6"/>
    </source>
</evidence>
<comment type="function">
    <text evidence="1">Ubiquitin-like protein that plays a role in cell proliferation and sister chromatid cohesion by associating with spliceosomal proteins. Participates thereby in pre-mRNA splicing by maintaining spliceosome integrity. Promotes the functional integrity of the Fanconi anemia DNA repair pathway by interacting with FANCI component and subsequently mediating the formation of FANCI homodimers. Also plays a protective role against ER stress-induced apoptosis.</text>
</comment>
<comment type="subunit">
    <text evidence="1">Interacts with CLK1, CLK3 and CLK4. Interacts with coilin/COIL. Interacts with spliceosome components SART1 and EFTUD2. Interacts with FANCI; this interaction promotes FANCI dimerization.</text>
</comment>
<comment type="subcellular location">
    <subcellularLocation>
        <location evidence="1">Cytoplasm</location>
    </subcellularLocation>
    <subcellularLocation>
        <location evidence="1">Nucleus</location>
    </subcellularLocation>
</comment>
<reference key="1">
    <citation type="journal article" date="2005" name="Science">
        <title>The transcriptional landscape of the mammalian genome.</title>
        <authorList>
            <person name="Carninci P."/>
            <person name="Kasukawa T."/>
            <person name="Katayama S."/>
            <person name="Gough J."/>
            <person name="Frith M.C."/>
            <person name="Maeda N."/>
            <person name="Oyama R."/>
            <person name="Ravasi T."/>
            <person name="Lenhard B."/>
            <person name="Wells C."/>
            <person name="Kodzius R."/>
            <person name="Shimokawa K."/>
            <person name="Bajic V.B."/>
            <person name="Brenner S.E."/>
            <person name="Batalov S."/>
            <person name="Forrest A.R."/>
            <person name="Zavolan M."/>
            <person name="Davis M.J."/>
            <person name="Wilming L.G."/>
            <person name="Aidinis V."/>
            <person name="Allen J.E."/>
            <person name="Ambesi-Impiombato A."/>
            <person name="Apweiler R."/>
            <person name="Aturaliya R.N."/>
            <person name="Bailey T.L."/>
            <person name="Bansal M."/>
            <person name="Baxter L."/>
            <person name="Beisel K.W."/>
            <person name="Bersano T."/>
            <person name="Bono H."/>
            <person name="Chalk A.M."/>
            <person name="Chiu K.P."/>
            <person name="Choudhary V."/>
            <person name="Christoffels A."/>
            <person name="Clutterbuck D.R."/>
            <person name="Crowe M.L."/>
            <person name="Dalla E."/>
            <person name="Dalrymple B.P."/>
            <person name="de Bono B."/>
            <person name="Della Gatta G."/>
            <person name="di Bernardo D."/>
            <person name="Down T."/>
            <person name="Engstrom P."/>
            <person name="Fagiolini M."/>
            <person name="Faulkner G."/>
            <person name="Fletcher C.F."/>
            <person name="Fukushima T."/>
            <person name="Furuno M."/>
            <person name="Futaki S."/>
            <person name="Gariboldi M."/>
            <person name="Georgii-Hemming P."/>
            <person name="Gingeras T.R."/>
            <person name="Gojobori T."/>
            <person name="Green R.E."/>
            <person name="Gustincich S."/>
            <person name="Harbers M."/>
            <person name="Hayashi Y."/>
            <person name="Hensch T.K."/>
            <person name="Hirokawa N."/>
            <person name="Hill D."/>
            <person name="Huminiecki L."/>
            <person name="Iacono M."/>
            <person name="Ikeo K."/>
            <person name="Iwama A."/>
            <person name="Ishikawa T."/>
            <person name="Jakt M."/>
            <person name="Kanapin A."/>
            <person name="Katoh M."/>
            <person name="Kawasawa Y."/>
            <person name="Kelso J."/>
            <person name="Kitamura H."/>
            <person name="Kitano H."/>
            <person name="Kollias G."/>
            <person name="Krishnan S.P."/>
            <person name="Kruger A."/>
            <person name="Kummerfeld S.K."/>
            <person name="Kurochkin I.V."/>
            <person name="Lareau L.F."/>
            <person name="Lazarevic D."/>
            <person name="Lipovich L."/>
            <person name="Liu J."/>
            <person name="Liuni S."/>
            <person name="McWilliam S."/>
            <person name="Madan Babu M."/>
            <person name="Madera M."/>
            <person name="Marchionni L."/>
            <person name="Matsuda H."/>
            <person name="Matsuzawa S."/>
            <person name="Miki H."/>
            <person name="Mignone F."/>
            <person name="Miyake S."/>
            <person name="Morris K."/>
            <person name="Mottagui-Tabar S."/>
            <person name="Mulder N."/>
            <person name="Nakano N."/>
            <person name="Nakauchi H."/>
            <person name="Ng P."/>
            <person name="Nilsson R."/>
            <person name="Nishiguchi S."/>
            <person name="Nishikawa S."/>
            <person name="Nori F."/>
            <person name="Ohara O."/>
            <person name="Okazaki Y."/>
            <person name="Orlando V."/>
            <person name="Pang K.C."/>
            <person name="Pavan W.J."/>
            <person name="Pavesi G."/>
            <person name="Pesole G."/>
            <person name="Petrovsky N."/>
            <person name="Piazza S."/>
            <person name="Reed J."/>
            <person name="Reid J.F."/>
            <person name="Ring B.Z."/>
            <person name="Ringwald M."/>
            <person name="Rost B."/>
            <person name="Ruan Y."/>
            <person name="Salzberg S.L."/>
            <person name="Sandelin A."/>
            <person name="Schneider C."/>
            <person name="Schoenbach C."/>
            <person name="Sekiguchi K."/>
            <person name="Semple C.A."/>
            <person name="Seno S."/>
            <person name="Sessa L."/>
            <person name="Sheng Y."/>
            <person name="Shibata Y."/>
            <person name="Shimada H."/>
            <person name="Shimada K."/>
            <person name="Silva D."/>
            <person name="Sinclair B."/>
            <person name="Sperling S."/>
            <person name="Stupka E."/>
            <person name="Sugiura K."/>
            <person name="Sultana R."/>
            <person name="Takenaka Y."/>
            <person name="Taki K."/>
            <person name="Tammoja K."/>
            <person name="Tan S.L."/>
            <person name="Tang S."/>
            <person name="Taylor M.S."/>
            <person name="Tegner J."/>
            <person name="Teichmann S.A."/>
            <person name="Ueda H.R."/>
            <person name="van Nimwegen E."/>
            <person name="Verardo R."/>
            <person name="Wei C.L."/>
            <person name="Yagi K."/>
            <person name="Yamanishi H."/>
            <person name="Zabarovsky E."/>
            <person name="Zhu S."/>
            <person name="Zimmer A."/>
            <person name="Hide W."/>
            <person name="Bult C."/>
            <person name="Grimmond S.M."/>
            <person name="Teasdale R.D."/>
            <person name="Liu E.T."/>
            <person name="Brusic V."/>
            <person name="Quackenbush J."/>
            <person name="Wahlestedt C."/>
            <person name="Mattick J.S."/>
            <person name="Hume D.A."/>
            <person name="Kai C."/>
            <person name="Sasaki D."/>
            <person name="Tomaru Y."/>
            <person name="Fukuda S."/>
            <person name="Kanamori-Katayama M."/>
            <person name="Suzuki M."/>
            <person name="Aoki J."/>
            <person name="Arakawa T."/>
            <person name="Iida J."/>
            <person name="Imamura K."/>
            <person name="Itoh M."/>
            <person name="Kato T."/>
            <person name="Kawaji H."/>
            <person name="Kawagashira N."/>
            <person name="Kawashima T."/>
            <person name="Kojima M."/>
            <person name="Kondo S."/>
            <person name="Konno H."/>
            <person name="Nakano K."/>
            <person name="Ninomiya N."/>
            <person name="Nishio T."/>
            <person name="Okada M."/>
            <person name="Plessy C."/>
            <person name="Shibata K."/>
            <person name="Shiraki T."/>
            <person name="Suzuki S."/>
            <person name="Tagami M."/>
            <person name="Waki K."/>
            <person name="Watahiki A."/>
            <person name="Okamura-Oho Y."/>
            <person name="Suzuki H."/>
            <person name="Kawai J."/>
            <person name="Hayashizaki Y."/>
        </authorList>
    </citation>
    <scope>NUCLEOTIDE SEQUENCE [LARGE SCALE MRNA]</scope>
    <source>
        <strain>C57BL/6J</strain>
        <tissue>Kidney</tissue>
        <tissue>Pancreas</tissue>
        <tissue>Spinal ganglion</tissue>
        <tissue>Tongue</tissue>
    </source>
</reference>
<reference key="2">
    <citation type="journal article" date="2004" name="Genome Res.">
        <title>The status, quality, and expansion of the NIH full-length cDNA project: the Mammalian Gene Collection (MGC).</title>
        <authorList>
            <consortium name="The MGC Project Team"/>
        </authorList>
    </citation>
    <scope>NUCLEOTIDE SEQUENCE [LARGE SCALE MRNA]</scope>
    <source>
        <tissue>Mammary gland</tissue>
    </source>
</reference>
<reference key="3">
    <citation type="submission" date="2003-12" db="PDB data bank">
        <title>Solution structure of the murine ubiquitin-like 5 protein from RIKEN cDNA 0610031K06.</title>
        <authorList>
            <consortium name="RIKEN structural genomics initiative (RSGI)"/>
        </authorList>
    </citation>
    <scope>STRUCTURE BY NMR OF 1-73</scope>
</reference>
<dbReference type="EMBL" id="AK002730">
    <property type="protein sequence ID" value="BAB22312.1"/>
    <property type="molecule type" value="mRNA"/>
</dbReference>
<dbReference type="EMBL" id="AK003992">
    <property type="protein sequence ID" value="BAB23111.1"/>
    <property type="molecule type" value="mRNA"/>
</dbReference>
<dbReference type="EMBL" id="AK007726">
    <property type="protein sequence ID" value="BAB25215.1"/>
    <property type="molecule type" value="mRNA"/>
</dbReference>
<dbReference type="EMBL" id="AK009854">
    <property type="protein sequence ID" value="BAB26545.1"/>
    <property type="molecule type" value="mRNA"/>
</dbReference>
<dbReference type="EMBL" id="AK012803">
    <property type="protein sequence ID" value="BAB28481.1"/>
    <property type="molecule type" value="mRNA"/>
</dbReference>
<dbReference type="EMBL" id="AK051149">
    <property type="protein sequence ID" value="BAC34537.1"/>
    <property type="molecule type" value="mRNA"/>
</dbReference>
<dbReference type="EMBL" id="BC028498">
    <property type="protein sequence ID" value="AAH28498.1"/>
    <property type="molecule type" value="mRNA"/>
</dbReference>
<dbReference type="CCDS" id="CCDS52733.1"/>
<dbReference type="RefSeq" id="NP_001347954.1">
    <property type="nucleotide sequence ID" value="NM_001361025.1"/>
</dbReference>
<dbReference type="RefSeq" id="NP_001347956.1">
    <property type="nucleotide sequence ID" value="NM_001361027.1"/>
</dbReference>
<dbReference type="RefSeq" id="NP_079677.1">
    <property type="nucleotide sequence ID" value="NM_025401.4"/>
</dbReference>
<dbReference type="RefSeq" id="XP_006510607.1">
    <property type="nucleotide sequence ID" value="XM_006510544.2"/>
</dbReference>
<dbReference type="PDB" id="1UH6">
    <property type="method" value="NMR"/>
    <property type="chains" value="A=1-73"/>
</dbReference>
<dbReference type="PDBsum" id="1UH6"/>
<dbReference type="BMRB" id="Q9EPV8"/>
<dbReference type="SMR" id="Q9EPV8"/>
<dbReference type="FunCoup" id="Q9EPV8">
    <property type="interactions" value="2938"/>
</dbReference>
<dbReference type="STRING" id="10090.ENSMUSP00000152093"/>
<dbReference type="iPTMnet" id="Q9EPV8"/>
<dbReference type="PhosphoSitePlus" id="Q9EPV8"/>
<dbReference type="PaxDb" id="10090-ENSMUSP00000123971"/>
<dbReference type="ProteomicsDB" id="297789"/>
<dbReference type="Pumba" id="Q9EPV8"/>
<dbReference type="DNASU" id="66177"/>
<dbReference type="Ensembl" id="ENSMUST00000129414.9">
    <property type="protein sequence ID" value="ENSMUSP00000123971.2"/>
    <property type="gene ID" value="ENSMUSG00000084786.10"/>
</dbReference>
<dbReference type="Ensembl" id="ENSMUST00000160124.2">
    <property type="protein sequence ID" value="ENSMUSP00000125364.2"/>
    <property type="gene ID" value="ENSMUSG00000084786.10"/>
</dbReference>
<dbReference type="Ensembl" id="ENSMUST00000160682.8">
    <property type="protein sequence ID" value="ENSMUSP00000124672.2"/>
    <property type="gene ID" value="ENSMUSG00000084786.10"/>
</dbReference>
<dbReference type="Ensembl" id="ENSMUST00000162303.8">
    <property type="protein sequence ID" value="ENSMUSP00000124812.2"/>
    <property type="gene ID" value="ENSMUSG00000084786.10"/>
</dbReference>
<dbReference type="GeneID" id="66177"/>
<dbReference type="KEGG" id="mmu:66177"/>
<dbReference type="UCSC" id="uc009ojc.1">
    <property type="organism name" value="mouse"/>
</dbReference>
<dbReference type="AGR" id="MGI:1913427"/>
<dbReference type="CTD" id="59286"/>
<dbReference type="MGI" id="MGI:1913427">
    <property type="gene designation" value="Ubl5"/>
</dbReference>
<dbReference type="VEuPathDB" id="HostDB:ENSMUSG00000084786"/>
<dbReference type="eggNOG" id="KOG3493">
    <property type="taxonomic scope" value="Eukaryota"/>
</dbReference>
<dbReference type="GeneTree" id="ENSGT00390000001945"/>
<dbReference type="HOGENOM" id="CLU_156193_2_0_1"/>
<dbReference type="InParanoid" id="Q9EPV8"/>
<dbReference type="OMA" id="GMSLEMQ"/>
<dbReference type="OrthoDB" id="3881at2759"/>
<dbReference type="PhylomeDB" id="Q9EPV8"/>
<dbReference type="TreeFam" id="TF318874"/>
<dbReference type="Reactome" id="R-MMU-72163">
    <property type="pathway name" value="mRNA Splicing - Major Pathway"/>
</dbReference>
<dbReference type="BioGRID-ORCS" id="66177">
    <property type="hits" value="29 hits in 76 CRISPR screens"/>
</dbReference>
<dbReference type="ChiTaRS" id="Ubl5">
    <property type="organism name" value="mouse"/>
</dbReference>
<dbReference type="EvolutionaryTrace" id="Q9EPV8"/>
<dbReference type="PRO" id="PR:Q9EPV8"/>
<dbReference type="Proteomes" id="UP000000589">
    <property type="component" value="Chromosome 9"/>
</dbReference>
<dbReference type="RNAct" id="Q9EPV8">
    <property type="molecule type" value="protein"/>
</dbReference>
<dbReference type="Bgee" id="ENSMUSG00000084786">
    <property type="expression patterns" value="Expressed in embryonic brain and 210 other cell types or tissues"/>
</dbReference>
<dbReference type="ExpressionAtlas" id="Q9EPV8">
    <property type="expression patterns" value="baseline and differential"/>
</dbReference>
<dbReference type="GO" id="GO:0005737">
    <property type="term" value="C:cytoplasm"/>
    <property type="evidence" value="ECO:0007669"/>
    <property type="project" value="UniProtKB-SubCell"/>
</dbReference>
<dbReference type="GO" id="GO:0005634">
    <property type="term" value="C:nucleus"/>
    <property type="evidence" value="ECO:0007669"/>
    <property type="project" value="UniProtKB-SubCell"/>
</dbReference>
<dbReference type="GO" id="GO:0036211">
    <property type="term" value="P:protein modification process"/>
    <property type="evidence" value="ECO:0007669"/>
    <property type="project" value="InterPro"/>
</dbReference>
<dbReference type="CDD" id="cd01791">
    <property type="entry name" value="Ubl_UBL5"/>
    <property type="match status" value="1"/>
</dbReference>
<dbReference type="FunFam" id="3.10.20.90:FF:000052">
    <property type="entry name" value="Ubiquitin-like protein 5"/>
    <property type="match status" value="1"/>
</dbReference>
<dbReference type="Gene3D" id="3.10.20.90">
    <property type="entry name" value="Phosphatidylinositol 3-kinase Catalytic Subunit, Chain A, domain 1"/>
    <property type="match status" value="1"/>
</dbReference>
<dbReference type="InterPro" id="IPR039732">
    <property type="entry name" value="Hub1/Ubl5"/>
</dbReference>
<dbReference type="InterPro" id="IPR000626">
    <property type="entry name" value="Ubiquitin-like_dom"/>
</dbReference>
<dbReference type="InterPro" id="IPR029071">
    <property type="entry name" value="Ubiquitin-like_domsf"/>
</dbReference>
<dbReference type="PANTHER" id="PTHR13042">
    <property type="entry name" value="UBIQUITIN-LIKE PROTEIN 5"/>
    <property type="match status" value="1"/>
</dbReference>
<dbReference type="Pfam" id="PF00240">
    <property type="entry name" value="ubiquitin"/>
    <property type="match status" value="1"/>
</dbReference>
<dbReference type="SUPFAM" id="SSF54236">
    <property type="entry name" value="Ubiquitin-like"/>
    <property type="match status" value="1"/>
</dbReference>
<gene>
    <name type="primary">Ubl5</name>
</gene>
<organism>
    <name type="scientific">Mus musculus</name>
    <name type="common">Mouse</name>
    <dbReference type="NCBI Taxonomy" id="10090"/>
    <lineage>
        <taxon>Eukaryota</taxon>
        <taxon>Metazoa</taxon>
        <taxon>Chordata</taxon>
        <taxon>Craniata</taxon>
        <taxon>Vertebrata</taxon>
        <taxon>Euteleostomi</taxon>
        <taxon>Mammalia</taxon>
        <taxon>Eutheria</taxon>
        <taxon>Euarchontoglires</taxon>
        <taxon>Glires</taxon>
        <taxon>Rodentia</taxon>
        <taxon>Myomorpha</taxon>
        <taxon>Muroidea</taxon>
        <taxon>Muridae</taxon>
        <taxon>Murinae</taxon>
        <taxon>Mus</taxon>
        <taxon>Mus</taxon>
    </lineage>
</organism>
<proteinExistence type="evidence at protein level"/>
<feature type="chain" id="PRO_0000114868" description="Ubiquitin-like protein 5">
    <location>
        <begin position="1"/>
        <end position="73"/>
    </location>
</feature>
<feature type="domain" description="Ubiquitin-like">
    <location>
        <begin position="1"/>
        <end position="73"/>
    </location>
</feature>
<feature type="strand" evidence="2">
    <location>
        <begin position="1"/>
        <end position="7"/>
    </location>
</feature>
<feature type="strand" evidence="2">
    <location>
        <begin position="9"/>
        <end position="12"/>
    </location>
</feature>
<feature type="strand" evidence="2">
    <location>
        <begin position="14"/>
        <end position="19"/>
    </location>
</feature>
<feature type="helix" evidence="2">
    <location>
        <begin position="24"/>
        <end position="35"/>
    </location>
</feature>
<feature type="helix" evidence="2">
    <location>
        <begin position="39"/>
        <end position="41"/>
    </location>
</feature>
<feature type="strand" evidence="2">
    <location>
        <begin position="43"/>
        <end position="46"/>
    </location>
</feature>
<feature type="helix" evidence="2">
    <location>
        <begin position="57"/>
        <end position="60"/>
    </location>
</feature>
<feature type="strand" evidence="2">
    <location>
        <begin position="66"/>
        <end position="71"/>
    </location>
</feature>
<keyword id="KW-0002">3D-structure</keyword>
<keyword id="KW-0963">Cytoplasm</keyword>
<keyword id="KW-0539">Nucleus</keyword>
<keyword id="KW-1185">Reference proteome</keyword>
<keyword id="KW-0833">Ubl conjugation pathway</keyword>